<comment type="function">
    <text evidence="1">Catalyzes the conversion of acetate into acetyl-CoA (AcCoA), an essential intermediate at the junction of anabolic and catabolic pathways. AcsA undergoes a two-step reaction. In the first half reaction, AcsA combines acetate with ATP to form acetyl-adenylate (AcAMP) intermediate. In the second half reaction, it can then transfer the acetyl group from AcAMP to the sulfhydryl group of CoA, forming the product AcCoA.</text>
</comment>
<comment type="catalytic activity">
    <reaction evidence="1">
        <text>acetate + ATP + CoA = acetyl-CoA + AMP + diphosphate</text>
        <dbReference type="Rhea" id="RHEA:23176"/>
        <dbReference type="ChEBI" id="CHEBI:30089"/>
        <dbReference type="ChEBI" id="CHEBI:30616"/>
        <dbReference type="ChEBI" id="CHEBI:33019"/>
        <dbReference type="ChEBI" id="CHEBI:57287"/>
        <dbReference type="ChEBI" id="CHEBI:57288"/>
        <dbReference type="ChEBI" id="CHEBI:456215"/>
        <dbReference type="EC" id="6.2.1.1"/>
    </reaction>
</comment>
<comment type="cofactor">
    <cofactor evidence="1">
        <name>Mg(2+)</name>
        <dbReference type="ChEBI" id="CHEBI:18420"/>
    </cofactor>
</comment>
<comment type="PTM">
    <text evidence="1">Acetylated. Deacetylation by the SIR2-homolog deacetylase activates the enzyme.</text>
</comment>
<comment type="similarity">
    <text evidence="1">Belongs to the ATP-dependent AMP-binding enzyme family.</text>
</comment>
<evidence type="ECO:0000255" key="1">
    <source>
        <dbReference type="HAMAP-Rule" id="MF_01123"/>
    </source>
</evidence>
<keyword id="KW-0007">Acetylation</keyword>
<keyword id="KW-0067">ATP-binding</keyword>
<keyword id="KW-0436">Ligase</keyword>
<keyword id="KW-0460">Magnesium</keyword>
<keyword id="KW-0479">Metal-binding</keyword>
<keyword id="KW-0547">Nucleotide-binding</keyword>
<protein>
    <recommendedName>
        <fullName evidence="1">Acetyl-coenzyme A synthetase</fullName>
        <shortName evidence="1">AcCoA synthetase</shortName>
        <shortName evidence="1">Acs</shortName>
        <ecNumber evidence="1">6.2.1.1</ecNumber>
    </recommendedName>
    <alternativeName>
        <fullName evidence="1">Acetate--CoA ligase</fullName>
    </alternativeName>
    <alternativeName>
        <fullName evidence="1">Acyl-activating enzyme</fullName>
    </alternativeName>
</protein>
<sequence length="651" mass="72836">MSEKLYPVLPEAKKNTLIDNETYLEWYEESVSDPDGFWAKHGRRIDWFKPFTKVKNTDFNGDVTIKWYEDGVTNVSYNCIDRHLKSRGDKVAIIWEGDNPYIDKKITYRELYENVCRMANVLKKHGVKKGDRVTIYLPMIPEAAYAMLACARIGAVHSVVFAGFSPEALAGRIVDCESTFVITADEGVRGGKPVALKENTDTAIDIAAKQYVMVNKVLVVRRTGGKVSWGRGRDLWYHQEVASVEPHCEPEPMNAEDPLFILYTSGSTGKPKGVLHTTGGYLVYASMTHQYVFDYHDGEIYWCTADVGWVTGHSYIVYGPLANGATTLMFEGVPNFPDQGRFWEVVDKHHVNIFYTAPTALRALMGAGDEFVTRSSRSTLRLLGSVGEPINPEAWEWYYNVVGDQKCPIVDTWWQTENGGILITPLPGATDLKPGSATRPFFGVKPVLVDNEGNVQECVADGNLCISDSWPGQMRTVYGDHKRFIETYFSTYKGMYFSGDGCRRDEDGYYWITGRVDDVLNISGHRLGTAEIESALVSHHSVSEAAVVGYPHPIKGQGIYCYVTLMTGADAQDPDELRKELVQHVRKEIGPIATPDKIQFAPGLPKTRSGKIMRRILRKIAEDEFGALGDTSTLADRGVVDDLIENRQNKK</sequence>
<proteinExistence type="inferred from homology"/>
<organism>
    <name type="scientific">Brucella melitensis biotype 2 (strain ATCC 23457)</name>
    <dbReference type="NCBI Taxonomy" id="546272"/>
    <lineage>
        <taxon>Bacteria</taxon>
        <taxon>Pseudomonadati</taxon>
        <taxon>Pseudomonadota</taxon>
        <taxon>Alphaproteobacteria</taxon>
        <taxon>Hyphomicrobiales</taxon>
        <taxon>Brucellaceae</taxon>
        <taxon>Brucella/Ochrobactrum group</taxon>
        <taxon>Brucella</taxon>
    </lineage>
</organism>
<name>ACSA_BRUMB</name>
<reference key="1">
    <citation type="submission" date="2009-03" db="EMBL/GenBank/DDBJ databases">
        <title>Brucella melitensis ATCC 23457 whole genome shotgun sequencing project.</title>
        <authorList>
            <person name="Setubal J.C."/>
            <person name="Boyle S."/>
            <person name="Crasta O.R."/>
            <person name="Gillespie J.J."/>
            <person name="Kenyon R.W."/>
            <person name="Lu J."/>
            <person name="Mane S."/>
            <person name="Nagrani S."/>
            <person name="Shallom J.M."/>
            <person name="Shallom S."/>
            <person name="Shukla M."/>
            <person name="Snyder E.E."/>
            <person name="Sobral B.W."/>
            <person name="Wattam A.R."/>
            <person name="Will R."/>
            <person name="Williams K."/>
            <person name="Yoo H."/>
            <person name="Munk C."/>
            <person name="Tapia R."/>
            <person name="Han C."/>
            <person name="Detter J.C."/>
            <person name="Bruce D."/>
            <person name="Brettin T.S."/>
        </authorList>
    </citation>
    <scope>NUCLEOTIDE SEQUENCE [LARGE SCALE GENOMIC DNA]</scope>
    <source>
        <strain>ATCC 23457</strain>
    </source>
</reference>
<dbReference type="EC" id="6.2.1.1" evidence="1"/>
<dbReference type="EMBL" id="CP001488">
    <property type="protein sequence ID" value="ACO01534.1"/>
    <property type="molecule type" value="Genomic_DNA"/>
</dbReference>
<dbReference type="SMR" id="C0RF62"/>
<dbReference type="KEGG" id="bmi:BMEA_A1861"/>
<dbReference type="HOGENOM" id="CLU_000022_3_6_5"/>
<dbReference type="Proteomes" id="UP000001748">
    <property type="component" value="Chromosome I"/>
</dbReference>
<dbReference type="GO" id="GO:0005829">
    <property type="term" value="C:cytosol"/>
    <property type="evidence" value="ECO:0007669"/>
    <property type="project" value="TreeGrafter"/>
</dbReference>
<dbReference type="GO" id="GO:0003987">
    <property type="term" value="F:acetate-CoA ligase activity"/>
    <property type="evidence" value="ECO:0007669"/>
    <property type="project" value="UniProtKB-UniRule"/>
</dbReference>
<dbReference type="GO" id="GO:0016208">
    <property type="term" value="F:AMP binding"/>
    <property type="evidence" value="ECO:0007669"/>
    <property type="project" value="InterPro"/>
</dbReference>
<dbReference type="GO" id="GO:0005524">
    <property type="term" value="F:ATP binding"/>
    <property type="evidence" value="ECO:0007669"/>
    <property type="project" value="UniProtKB-KW"/>
</dbReference>
<dbReference type="GO" id="GO:0046872">
    <property type="term" value="F:metal ion binding"/>
    <property type="evidence" value="ECO:0007669"/>
    <property type="project" value="UniProtKB-KW"/>
</dbReference>
<dbReference type="GO" id="GO:0019427">
    <property type="term" value="P:acetyl-CoA biosynthetic process from acetate"/>
    <property type="evidence" value="ECO:0007669"/>
    <property type="project" value="InterPro"/>
</dbReference>
<dbReference type="CDD" id="cd05966">
    <property type="entry name" value="ACS"/>
    <property type="match status" value="1"/>
</dbReference>
<dbReference type="FunFam" id="3.30.300.30:FF:000004">
    <property type="entry name" value="Acetyl-coenzyme A synthetase"/>
    <property type="match status" value="1"/>
</dbReference>
<dbReference type="FunFam" id="3.40.50.12780:FF:000001">
    <property type="entry name" value="Acetyl-coenzyme A synthetase"/>
    <property type="match status" value="1"/>
</dbReference>
<dbReference type="Gene3D" id="3.30.300.30">
    <property type="match status" value="1"/>
</dbReference>
<dbReference type="Gene3D" id="3.40.50.12780">
    <property type="entry name" value="N-terminal domain of ligase-like"/>
    <property type="match status" value="1"/>
</dbReference>
<dbReference type="HAMAP" id="MF_01123">
    <property type="entry name" value="Ac_CoA_synth"/>
    <property type="match status" value="1"/>
</dbReference>
<dbReference type="InterPro" id="IPR011904">
    <property type="entry name" value="Ac_CoA_lig"/>
</dbReference>
<dbReference type="InterPro" id="IPR032387">
    <property type="entry name" value="ACAS_N"/>
</dbReference>
<dbReference type="InterPro" id="IPR025110">
    <property type="entry name" value="AMP-bd_C"/>
</dbReference>
<dbReference type="InterPro" id="IPR045851">
    <property type="entry name" value="AMP-bd_C_sf"/>
</dbReference>
<dbReference type="InterPro" id="IPR020845">
    <property type="entry name" value="AMP-binding_CS"/>
</dbReference>
<dbReference type="InterPro" id="IPR000873">
    <property type="entry name" value="AMP-dep_synth/lig_dom"/>
</dbReference>
<dbReference type="InterPro" id="IPR042099">
    <property type="entry name" value="ANL_N_sf"/>
</dbReference>
<dbReference type="NCBIfam" id="TIGR02188">
    <property type="entry name" value="Ac_CoA_lig_AcsA"/>
    <property type="match status" value="1"/>
</dbReference>
<dbReference type="NCBIfam" id="NF001208">
    <property type="entry name" value="PRK00174.1"/>
    <property type="match status" value="1"/>
</dbReference>
<dbReference type="PANTHER" id="PTHR24095">
    <property type="entry name" value="ACETYL-COENZYME A SYNTHETASE"/>
    <property type="match status" value="1"/>
</dbReference>
<dbReference type="PANTHER" id="PTHR24095:SF14">
    <property type="entry name" value="ACETYL-COENZYME A SYNTHETASE 1"/>
    <property type="match status" value="1"/>
</dbReference>
<dbReference type="Pfam" id="PF16177">
    <property type="entry name" value="ACAS_N"/>
    <property type="match status" value="1"/>
</dbReference>
<dbReference type="Pfam" id="PF00501">
    <property type="entry name" value="AMP-binding"/>
    <property type="match status" value="1"/>
</dbReference>
<dbReference type="Pfam" id="PF13193">
    <property type="entry name" value="AMP-binding_C"/>
    <property type="match status" value="1"/>
</dbReference>
<dbReference type="SUPFAM" id="SSF56801">
    <property type="entry name" value="Acetyl-CoA synthetase-like"/>
    <property type="match status" value="1"/>
</dbReference>
<dbReference type="PROSITE" id="PS00455">
    <property type="entry name" value="AMP_BINDING"/>
    <property type="match status" value="1"/>
</dbReference>
<gene>
    <name evidence="1" type="primary">acsA</name>
    <name type="ordered locus">BMEA_A1861</name>
</gene>
<accession>C0RF62</accession>
<feature type="chain" id="PRO_1000164048" description="Acetyl-coenzyme A synthetase">
    <location>
        <begin position="1"/>
        <end position="651"/>
    </location>
</feature>
<feature type="binding site" evidence="1">
    <location>
        <begin position="189"/>
        <end position="192"/>
    </location>
    <ligand>
        <name>CoA</name>
        <dbReference type="ChEBI" id="CHEBI:57287"/>
    </ligand>
</feature>
<feature type="binding site" evidence="1">
    <location>
        <position position="311"/>
    </location>
    <ligand>
        <name>CoA</name>
        <dbReference type="ChEBI" id="CHEBI:57287"/>
    </ligand>
</feature>
<feature type="binding site" evidence="1">
    <location>
        <position position="335"/>
    </location>
    <ligand>
        <name>CoA</name>
        <dbReference type="ChEBI" id="CHEBI:57287"/>
    </ligand>
</feature>
<feature type="binding site" evidence="1">
    <location>
        <begin position="387"/>
        <end position="389"/>
    </location>
    <ligand>
        <name>ATP</name>
        <dbReference type="ChEBI" id="CHEBI:30616"/>
    </ligand>
</feature>
<feature type="binding site" evidence="1">
    <location>
        <begin position="411"/>
        <end position="416"/>
    </location>
    <ligand>
        <name>ATP</name>
        <dbReference type="ChEBI" id="CHEBI:30616"/>
    </ligand>
</feature>
<feature type="binding site" evidence="1">
    <location>
        <position position="500"/>
    </location>
    <ligand>
        <name>ATP</name>
        <dbReference type="ChEBI" id="CHEBI:30616"/>
    </ligand>
</feature>
<feature type="binding site" evidence="1">
    <location>
        <position position="515"/>
    </location>
    <ligand>
        <name>ATP</name>
        <dbReference type="ChEBI" id="CHEBI:30616"/>
    </ligand>
</feature>
<feature type="binding site" evidence="1">
    <location>
        <position position="523"/>
    </location>
    <ligand>
        <name>CoA</name>
        <dbReference type="ChEBI" id="CHEBI:57287"/>
    </ligand>
</feature>
<feature type="binding site" evidence="1">
    <location>
        <position position="526"/>
    </location>
    <ligand>
        <name>ATP</name>
        <dbReference type="ChEBI" id="CHEBI:30616"/>
    </ligand>
</feature>
<feature type="binding site" evidence="1">
    <location>
        <position position="537"/>
    </location>
    <ligand>
        <name>Mg(2+)</name>
        <dbReference type="ChEBI" id="CHEBI:18420"/>
    </ligand>
</feature>
<feature type="binding site" evidence="1">
    <location>
        <position position="539"/>
    </location>
    <ligand>
        <name>Mg(2+)</name>
        <dbReference type="ChEBI" id="CHEBI:18420"/>
    </ligand>
</feature>
<feature type="binding site" evidence="1">
    <location>
        <position position="542"/>
    </location>
    <ligand>
        <name>Mg(2+)</name>
        <dbReference type="ChEBI" id="CHEBI:18420"/>
    </ligand>
</feature>
<feature type="binding site">
    <location>
        <position position="586"/>
    </location>
    <ligand>
        <name>CoA</name>
        <dbReference type="ChEBI" id="CHEBI:57287"/>
    </ligand>
</feature>
<feature type="modified residue" description="N6-acetyllysine" evidence="1">
    <location>
        <position position="611"/>
    </location>
</feature>